<protein>
    <recommendedName>
        <fullName evidence="5">Immunoglobulin domain-containing protein oig-1</fullName>
    </recommendedName>
</protein>
<name>OIG1_CAEEL</name>
<proteinExistence type="evidence at transcript level"/>
<comment type="function">
    <text evidence="3 4">Plays a role in neural development, where it temporally regulates synapse formation in the D-type inhibitory GABAergic motor neurons, dorsal D (DD) and ventral D (VD) motor neurons (PubMed:26083757, PubMed:26387713). Controls the translocation of postsynaptic proteins, such as the acetylcholine receptor subunit acr-12, and presynaptic proteins, such as snb-1, along nerve cords to prevent premature synapse remodeling/formation (PubMed:26387713).</text>
</comment>
<comment type="subcellular location">
    <subcellularLocation>
        <location evidence="4">Membrane</location>
    </subcellularLocation>
    <subcellularLocation>
        <location evidence="4">Secreted</location>
        <location evidence="4">Extracellular space</location>
    </subcellularLocation>
    <subcellularLocation>
        <location evidence="3 4">Cell projection</location>
        <location evidence="3 4">Dendrite</location>
    </subcellularLocation>
    <subcellularLocation>
        <location evidence="3">Cell projection</location>
        <location evidence="3">Axon</location>
    </subcellularLocation>
    <text evidence="3 4">The non-secreted form shows punctate expression in dendrites and is also involved in synapse formation/remodeling. May also be secreted by coelomocytes.</text>
</comment>
<comment type="tissue specificity">
    <text evidence="3 4">Expressed in DD and VD GABAergic motor neurons (PubMed:26083757, PubMed:26387713). Expressed in a subset of head neurons including M2 motor neurons in the pharynx (PubMed:26083757, PubMed:26387713). Expressed in coelomocytes (PubMed:26387713).</text>
</comment>
<comment type="developmental stage">
    <text evidence="3 4">Transiently expressed in DD GABAergic motor neurons in embryos and during larval stage L1, with expression decreasing as development proceeds (PubMed:26083757, PubMed:26387713). Expressed strongly in VD GABAergic motor neurons from the end of larval stage L1 onwards and in particular along the ventral nerve cord (PubMed:26083757, PubMed:26387713). Specifically expressed in DD GABAergic motor neurons in the dorsal and ventral nerve cords at larval stages L1 and L4 (PubMed:26387713).</text>
</comment>
<comment type="disruption phenotype">
    <text evidence="3 4">Viable with locomotory defects which may be attributed to impaired GABAergic motor neuron function (PubMed:26083757, PubMed:26387713). Hypersensitive to the drug aldicarb which may be indicative of abnormal GABAergic signaling (PubMed:26083757). Premature postsynaptic remodeling/formation of DD GABAergic motor neurons in animals at larval stage L1 with remodeling/formation occurring 8-16 hours posthatching as opposed to 14-18 hours posthatching in wild-type animals (PubMed:26387713). Mislocalization of postsynaptic proteins with increased dorsal to ventral translocation of the acr-12 receptor in VD GABAergic motor neurons at larval stages L2 and L4; leading to no acr-12 puncta in the dorsal nerve and probably contributing to improper formation of synaptic inputs and ectopic postsynaptic remodeling/formation of VD motor neurons (PubMed:26083757, PubMed:26387713). Abnormal ectopic clustering of the postsynaptic receptor unc-49 along the dorsal nerve cord of DD GABAergic motor neurons (PubMed:26083757). Abnormal clustering of the presynaptic proteins snb-1 and rab-3 along the dorsal nerve cord of DD GABAergic motor neurons (PubMed:26083757). Additionally, aberrant localization of presynaptic proteins in VD GABAergic motor neurons with increased puncta for presynaptic proteins including snb-1, rab-3 and syd-2 in the dorsal nerve cord, but fewer puncta in the ventral nerve cord at larval stages proceeding the L1 larval stage, probably indicative of impaired and ectopic presynaptic remodeling/formation (PubMed:26083757, PubMed:26387713).</text>
</comment>
<evidence type="ECO:0000255" key="1"/>
<evidence type="ECO:0000255" key="2">
    <source>
        <dbReference type="PROSITE-ProRule" id="PRU00114"/>
    </source>
</evidence>
<evidence type="ECO:0000269" key="3">
    <source>
    </source>
</evidence>
<evidence type="ECO:0000269" key="4">
    <source>
    </source>
</evidence>
<evidence type="ECO:0000305" key="5"/>
<evidence type="ECO:0000312" key="6">
    <source>
        <dbReference type="Proteomes" id="UP000001940"/>
    </source>
</evidence>
<evidence type="ECO:0000312" key="7">
    <source>
        <dbReference type="WormBase" id="C09E7.3"/>
    </source>
</evidence>
<sequence length="137" mass="15745">MFSELRILRDILLLCFLSVGINAKSSHIEDLDFTDHTNGSPKISRSSYFKQDFRLGYKLKLFCESSGNPRPQIVWYHRGVEVNPDHNRTIRFSIHGDTVSSHLEVDPTSIGDKGEYECVATNLKGSRVKKFLTDYQY</sequence>
<keyword id="KW-0966">Cell projection</keyword>
<keyword id="KW-1015">Disulfide bond</keyword>
<keyword id="KW-0393">Immunoglobulin domain</keyword>
<keyword id="KW-0472">Membrane</keyword>
<keyword id="KW-0524">Neurogenesis</keyword>
<keyword id="KW-1185">Reference proteome</keyword>
<keyword id="KW-0964">Secreted</keyword>
<keyword id="KW-0732">Signal</keyword>
<dbReference type="EMBL" id="BX284603">
    <property type="protein sequence ID" value="CCD63912.1"/>
    <property type="molecule type" value="Genomic_DNA"/>
</dbReference>
<dbReference type="RefSeq" id="NP_498439.1">
    <property type="nucleotide sequence ID" value="NM_066038.3"/>
</dbReference>
<dbReference type="SMR" id="Q9N5Z2"/>
<dbReference type="STRING" id="6239.C09E7.3.1"/>
<dbReference type="PaxDb" id="6239-C09E7.3"/>
<dbReference type="EnsemblMetazoa" id="C09E7.3.1">
    <property type="protein sequence ID" value="C09E7.3.1"/>
    <property type="gene ID" value="WBGene00003859"/>
</dbReference>
<dbReference type="GeneID" id="182450"/>
<dbReference type="KEGG" id="cel:CELE_C09E7.3"/>
<dbReference type="UCSC" id="C09E7.3">
    <property type="organism name" value="c. elegans"/>
</dbReference>
<dbReference type="AGR" id="WB:WBGene00003859"/>
<dbReference type="CTD" id="182450"/>
<dbReference type="WormBase" id="C09E7.3">
    <property type="protein sequence ID" value="CE23536"/>
    <property type="gene ID" value="WBGene00003859"/>
    <property type="gene designation" value="oig-1"/>
</dbReference>
<dbReference type="eggNOG" id="ENOG502TI3H">
    <property type="taxonomic scope" value="Eukaryota"/>
</dbReference>
<dbReference type="GeneTree" id="ENSGT00970000196744"/>
<dbReference type="HOGENOM" id="CLU_154798_0_0_1"/>
<dbReference type="InParanoid" id="Q9N5Z2"/>
<dbReference type="OMA" id="IGDKGEY"/>
<dbReference type="OrthoDB" id="6127080at2759"/>
<dbReference type="PhylomeDB" id="Q9N5Z2"/>
<dbReference type="PRO" id="PR:Q9N5Z2"/>
<dbReference type="Proteomes" id="UP000001940">
    <property type="component" value="Chromosome III"/>
</dbReference>
<dbReference type="Bgee" id="WBGene00003859">
    <property type="expression patterns" value="Expressed in larva and 3 other cell types or tissues"/>
</dbReference>
<dbReference type="GO" id="GO:0030424">
    <property type="term" value="C:axon"/>
    <property type="evidence" value="ECO:0007669"/>
    <property type="project" value="UniProtKB-SubCell"/>
</dbReference>
<dbReference type="GO" id="GO:0030425">
    <property type="term" value="C:dendrite"/>
    <property type="evidence" value="ECO:0007669"/>
    <property type="project" value="UniProtKB-SubCell"/>
</dbReference>
<dbReference type="GO" id="GO:0005576">
    <property type="term" value="C:extracellular region"/>
    <property type="evidence" value="ECO:0007669"/>
    <property type="project" value="UniProtKB-SubCell"/>
</dbReference>
<dbReference type="GO" id="GO:0016020">
    <property type="term" value="C:membrane"/>
    <property type="evidence" value="ECO:0007669"/>
    <property type="project" value="UniProtKB-SubCell"/>
</dbReference>
<dbReference type="GO" id="GO:0016322">
    <property type="term" value="P:neuron remodeling"/>
    <property type="evidence" value="ECO:0000315"/>
    <property type="project" value="UniProtKB"/>
</dbReference>
<dbReference type="CDD" id="cd00096">
    <property type="entry name" value="Ig"/>
    <property type="match status" value="1"/>
</dbReference>
<dbReference type="Gene3D" id="2.60.40.10">
    <property type="entry name" value="Immunoglobulins"/>
    <property type="match status" value="1"/>
</dbReference>
<dbReference type="InterPro" id="IPR050958">
    <property type="entry name" value="Cell_Adh-Cytoskel_Orgn"/>
</dbReference>
<dbReference type="InterPro" id="IPR007110">
    <property type="entry name" value="Ig-like_dom"/>
</dbReference>
<dbReference type="InterPro" id="IPR036179">
    <property type="entry name" value="Ig-like_dom_sf"/>
</dbReference>
<dbReference type="InterPro" id="IPR013783">
    <property type="entry name" value="Ig-like_fold"/>
</dbReference>
<dbReference type="InterPro" id="IPR013098">
    <property type="entry name" value="Ig_I-set"/>
</dbReference>
<dbReference type="InterPro" id="IPR003598">
    <property type="entry name" value="Ig_sub2"/>
</dbReference>
<dbReference type="PANTHER" id="PTHR45080">
    <property type="entry name" value="CONTACTIN 5"/>
    <property type="match status" value="1"/>
</dbReference>
<dbReference type="PANTHER" id="PTHR45080:SF8">
    <property type="entry name" value="IG-LIKE DOMAIN-CONTAINING PROTEIN"/>
    <property type="match status" value="1"/>
</dbReference>
<dbReference type="Pfam" id="PF07679">
    <property type="entry name" value="I-set"/>
    <property type="match status" value="1"/>
</dbReference>
<dbReference type="SMART" id="SM00408">
    <property type="entry name" value="IGc2"/>
    <property type="match status" value="1"/>
</dbReference>
<dbReference type="SUPFAM" id="SSF48726">
    <property type="entry name" value="Immunoglobulin"/>
    <property type="match status" value="1"/>
</dbReference>
<dbReference type="PROSITE" id="PS50835">
    <property type="entry name" value="IG_LIKE"/>
    <property type="match status" value="1"/>
</dbReference>
<accession>Q9N5Z2</accession>
<reference evidence="6" key="1">
    <citation type="journal article" date="1998" name="Science">
        <title>Genome sequence of the nematode C. elegans: a platform for investigating biology.</title>
        <authorList>
            <consortium name="The C. elegans sequencing consortium"/>
        </authorList>
    </citation>
    <scope>NUCLEOTIDE SEQUENCE [LARGE SCALE GENOMIC DNA]</scope>
    <source>
        <strain evidence="6">Bristol N2</strain>
    </source>
</reference>
<reference evidence="5" key="2">
    <citation type="journal article" date="2015" name="Curr. Biol.">
        <title>Transcriptional control of synaptic remodeling through regulated expression of an immunoglobulin superfamily protein.</title>
        <authorList>
            <person name="He S."/>
            <person name="Philbrook A."/>
            <person name="McWhirter R."/>
            <person name="Gabel C.V."/>
            <person name="Taub D.G."/>
            <person name="Carter M.H."/>
            <person name="Hanna I.M."/>
            <person name="Francis M.M."/>
            <person name="Miller D.M. III"/>
        </authorList>
    </citation>
    <scope>FUNCTION</scope>
    <scope>SUBCELLULAR LOCATION</scope>
    <scope>TISSUE SPECIFICITY</scope>
    <scope>DEVELOPMENTAL STAGE</scope>
    <scope>DISRUPTION PHENOTYPE</scope>
</reference>
<reference evidence="5" key="3">
    <citation type="journal article" date="2015" name="Nature">
        <title>Spatiotemporal control of a novel synaptic organizer molecule.</title>
        <authorList>
            <person name="Howell K."/>
            <person name="White J.G."/>
            <person name="Hobert O."/>
        </authorList>
    </citation>
    <scope>FUNCTION</scope>
    <scope>SUBCELLULAR LOCATION</scope>
    <scope>TISSUE SPECIFICITY</scope>
    <scope>DEVELOPMENTAL STAGE</scope>
    <scope>DISRUPTION PHENOTYPE</scope>
</reference>
<gene>
    <name evidence="7" type="primary">oig-1</name>
    <name evidence="7" type="ORF">C09E7.3</name>
</gene>
<organism evidence="6">
    <name type="scientific">Caenorhabditis elegans</name>
    <dbReference type="NCBI Taxonomy" id="6239"/>
    <lineage>
        <taxon>Eukaryota</taxon>
        <taxon>Metazoa</taxon>
        <taxon>Ecdysozoa</taxon>
        <taxon>Nematoda</taxon>
        <taxon>Chromadorea</taxon>
        <taxon>Rhabditida</taxon>
        <taxon>Rhabditina</taxon>
        <taxon>Rhabditomorpha</taxon>
        <taxon>Rhabditoidea</taxon>
        <taxon>Rhabditidae</taxon>
        <taxon>Peloderinae</taxon>
        <taxon>Caenorhabditis</taxon>
    </lineage>
</organism>
<feature type="signal peptide" evidence="1">
    <location>
        <begin position="1"/>
        <end position="23"/>
    </location>
</feature>
<feature type="chain" id="PRO_5004330308" description="Immunoglobulin domain-containing protein oig-1">
    <location>
        <begin position="24"/>
        <end position="137"/>
    </location>
</feature>
<feature type="domain" description="Ig-like C2-type" evidence="2">
    <location>
        <begin position="41"/>
        <end position="133"/>
    </location>
</feature>
<feature type="disulfide bond" evidence="2">
    <location>
        <begin position="63"/>
        <end position="118"/>
    </location>
</feature>